<comment type="function">
    <text evidence="1">Binds 23S rRNA and is also seen to make contacts with the A and possibly P site tRNAs.</text>
</comment>
<comment type="subunit">
    <text evidence="1">Part of the 50S ribosomal subunit.</text>
</comment>
<comment type="similarity">
    <text evidence="1">Belongs to the universal ribosomal protein uL16 family.</text>
</comment>
<reference key="1">
    <citation type="submission" date="2007-07" db="EMBL/GenBank/DDBJ databases">
        <title>Genome sequence of Campylobacter curvus 525.92 isolated from human feces.</title>
        <authorList>
            <person name="Fouts D.E."/>
            <person name="Mongodin E.F."/>
            <person name="Puiu D."/>
            <person name="Sebastian Y."/>
            <person name="Miller W.G."/>
            <person name="Mandrell R.E."/>
            <person name="Lastovica A.J."/>
            <person name="Nelson K.E."/>
        </authorList>
    </citation>
    <scope>NUCLEOTIDE SEQUENCE [LARGE SCALE GENOMIC DNA]</scope>
    <source>
        <strain>525.92</strain>
    </source>
</reference>
<sequence length="141" mass="16144">MLMPKRTKFRKQMKGRNRGYATRGASLSTGEFALKAVEAGRVNSRQIEAARQALTRHVKRQAKIWIRVFPDKPLTKKPLQTRMGKGKAGVEEWVMNIKPGRILFEMAGVSEELAREALTLAMHKLPFKSKFVTRESENEIY</sequence>
<organism>
    <name type="scientific">Campylobacter curvus (strain 525.92)</name>
    <dbReference type="NCBI Taxonomy" id="360105"/>
    <lineage>
        <taxon>Bacteria</taxon>
        <taxon>Pseudomonadati</taxon>
        <taxon>Campylobacterota</taxon>
        <taxon>Epsilonproteobacteria</taxon>
        <taxon>Campylobacterales</taxon>
        <taxon>Campylobacteraceae</taxon>
        <taxon>Campylobacter</taxon>
    </lineage>
</organism>
<dbReference type="EMBL" id="CP000767">
    <property type="protein sequence ID" value="EAT99602.1"/>
    <property type="molecule type" value="Genomic_DNA"/>
</dbReference>
<dbReference type="RefSeq" id="WP_011992851.1">
    <property type="nucleotide sequence ID" value="NC_009715.2"/>
</dbReference>
<dbReference type="SMR" id="A7H105"/>
<dbReference type="STRING" id="360105.CCV52592_1026"/>
<dbReference type="KEGG" id="ccv:CCV52592_1026"/>
<dbReference type="HOGENOM" id="CLU_078858_2_1_7"/>
<dbReference type="OrthoDB" id="9802589at2"/>
<dbReference type="Proteomes" id="UP000006380">
    <property type="component" value="Chromosome"/>
</dbReference>
<dbReference type="GO" id="GO:0022625">
    <property type="term" value="C:cytosolic large ribosomal subunit"/>
    <property type="evidence" value="ECO:0007669"/>
    <property type="project" value="TreeGrafter"/>
</dbReference>
<dbReference type="GO" id="GO:0019843">
    <property type="term" value="F:rRNA binding"/>
    <property type="evidence" value="ECO:0007669"/>
    <property type="project" value="UniProtKB-UniRule"/>
</dbReference>
<dbReference type="GO" id="GO:0003735">
    <property type="term" value="F:structural constituent of ribosome"/>
    <property type="evidence" value="ECO:0007669"/>
    <property type="project" value="InterPro"/>
</dbReference>
<dbReference type="GO" id="GO:0000049">
    <property type="term" value="F:tRNA binding"/>
    <property type="evidence" value="ECO:0007669"/>
    <property type="project" value="UniProtKB-KW"/>
</dbReference>
<dbReference type="GO" id="GO:0006412">
    <property type="term" value="P:translation"/>
    <property type="evidence" value="ECO:0007669"/>
    <property type="project" value="UniProtKB-UniRule"/>
</dbReference>
<dbReference type="CDD" id="cd01433">
    <property type="entry name" value="Ribosomal_L16_L10e"/>
    <property type="match status" value="1"/>
</dbReference>
<dbReference type="FunFam" id="3.90.1170.10:FF:000001">
    <property type="entry name" value="50S ribosomal protein L16"/>
    <property type="match status" value="1"/>
</dbReference>
<dbReference type="Gene3D" id="3.90.1170.10">
    <property type="entry name" value="Ribosomal protein L10e/L16"/>
    <property type="match status" value="1"/>
</dbReference>
<dbReference type="HAMAP" id="MF_01342">
    <property type="entry name" value="Ribosomal_uL16"/>
    <property type="match status" value="1"/>
</dbReference>
<dbReference type="InterPro" id="IPR047873">
    <property type="entry name" value="Ribosomal_uL16"/>
</dbReference>
<dbReference type="InterPro" id="IPR000114">
    <property type="entry name" value="Ribosomal_uL16_bact-type"/>
</dbReference>
<dbReference type="InterPro" id="IPR020798">
    <property type="entry name" value="Ribosomal_uL16_CS"/>
</dbReference>
<dbReference type="InterPro" id="IPR016180">
    <property type="entry name" value="Ribosomal_uL16_dom"/>
</dbReference>
<dbReference type="InterPro" id="IPR036920">
    <property type="entry name" value="Ribosomal_uL16_sf"/>
</dbReference>
<dbReference type="NCBIfam" id="TIGR01164">
    <property type="entry name" value="rplP_bact"/>
    <property type="match status" value="1"/>
</dbReference>
<dbReference type="PANTHER" id="PTHR12220">
    <property type="entry name" value="50S/60S RIBOSOMAL PROTEIN L16"/>
    <property type="match status" value="1"/>
</dbReference>
<dbReference type="PANTHER" id="PTHR12220:SF13">
    <property type="entry name" value="LARGE RIBOSOMAL SUBUNIT PROTEIN UL16M"/>
    <property type="match status" value="1"/>
</dbReference>
<dbReference type="Pfam" id="PF00252">
    <property type="entry name" value="Ribosomal_L16"/>
    <property type="match status" value="1"/>
</dbReference>
<dbReference type="PRINTS" id="PR00060">
    <property type="entry name" value="RIBOSOMALL16"/>
</dbReference>
<dbReference type="SUPFAM" id="SSF54686">
    <property type="entry name" value="Ribosomal protein L16p/L10e"/>
    <property type="match status" value="1"/>
</dbReference>
<dbReference type="PROSITE" id="PS00586">
    <property type="entry name" value="RIBOSOMAL_L16_1"/>
    <property type="match status" value="1"/>
</dbReference>
<proteinExistence type="inferred from homology"/>
<protein>
    <recommendedName>
        <fullName evidence="1">Large ribosomal subunit protein uL16</fullName>
    </recommendedName>
    <alternativeName>
        <fullName evidence="3">50S ribosomal protein L16</fullName>
    </alternativeName>
</protein>
<keyword id="KW-1185">Reference proteome</keyword>
<keyword id="KW-0687">Ribonucleoprotein</keyword>
<keyword id="KW-0689">Ribosomal protein</keyword>
<keyword id="KW-0694">RNA-binding</keyword>
<keyword id="KW-0699">rRNA-binding</keyword>
<keyword id="KW-0820">tRNA-binding</keyword>
<gene>
    <name evidence="1" type="primary">rplP</name>
    <name type="ordered locus">Ccur92_18430</name>
    <name type="ORF">CCV52592_1026</name>
</gene>
<name>RL16_CAMC5</name>
<accession>A7H105</accession>
<evidence type="ECO:0000255" key="1">
    <source>
        <dbReference type="HAMAP-Rule" id="MF_01342"/>
    </source>
</evidence>
<evidence type="ECO:0000256" key="2">
    <source>
        <dbReference type="SAM" id="MobiDB-lite"/>
    </source>
</evidence>
<evidence type="ECO:0000305" key="3"/>
<feature type="chain" id="PRO_1000054597" description="Large ribosomal subunit protein uL16">
    <location>
        <begin position="1"/>
        <end position="141"/>
    </location>
</feature>
<feature type="region of interest" description="Disordered" evidence="2">
    <location>
        <begin position="1"/>
        <end position="22"/>
    </location>
</feature>
<feature type="compositionally biased region" description="Basic residues" evidence="2">
    <location>
        <begin position="1"/>
        <end position="17"/>
    </location>
</feature>